<gene>
    <name type="primary">DOF4.4</name>
    <name type="ordered locus">At4g21050</name>
    <name type="ORF">T13K14.210</name>
</gene>
<name>DOF44_ARATH</name>
<sequence length="210" mass="23970">MDNLNVFANEDNQVNGLKRPPPSRVCPRCDSDNTKFCFYNNYSESQPRYFCKNCRRYWTHGGALRNIPVGGSCRKPKRLKVDQSSISEMVSVENQPINHQSFRQTQENNEFVRSFDASSSATVTAVPNHFGYLSELHGVTNLLPIQSFRTMDCLDFGDESFQQGYYDVGSNDLIDNPLINQSIGGYVDNLTSYCINQVEPKLQPRYEHES</sequence>
<protein>
    <recommendedName>
        <fullName>Dof zinc finger protein DOF4.4</fullName>
        <shortName>AtDOF4.4</shortName>
    </recommendedName>
</protein>
<keyword id="KW-0238">DNA-binding</keyword>
<keyword id="KW-0479">Metal-binding</keyword>
<keyword id="KW-0539">Nucleus</keyword>
<keyword id="KW-1185">Reference proteome</keyword>
<keyword id="KW-0804">Transcription</keyword>
<keyword id="KW-0805">Transcription regulation</keyword>
<keyword id="KW-0862">Zinc</keyword>
<keyword id="KW-0863">Zinc-finger</keyword>
<dbReference type="EMBL" id="AL080282">
    <property type="protein sequence ID" value="CAB45900.1"/>
    <property type="molecule type" value="Genomic_DNA"/>
</dbReference>
<dbReference type="EMBL" id="AL161554">
    <property type="protein sequence ID" value="CAB79105.1"/>
    <property type="molecule type" value="Genomic_DNA"/>
</dbReference>
<dbReference type="EMBL" id="CP002687">
    <property type="protein sequence ID" value="AEE84391.1"/>
    <property type="molecule type" value="Genomic_DNA"/>
</dbReference>
<dbReference type="EMBL" id="AB493689">
    <property type="protein sequence ID" value="BAH30527.1"/>
    <property type="molecule type" value="Genomic_DNA"/>
</dbReference>
<dbReference type="PIR" id="T10647">
    <property type="entry name" value="T10647"/>
</dbReference>
<dbReference type="RefSeq" id="NP_193837.1">
    <property type="nucleotide sequence ID" value="NM_118223.1"/>
</dbReference>
<dbReference type="BioGRID" id="13143">
    <property type="interactions" value="1"/>
</dbReference>
<dbReference type="FunCoup" id="Q9SUA9">
    <property type="interactions" value="3"/>
</dbReference>
<dbReference type="STRING" id="3702.Q9SUA9"/>
<dbReference type="PaxDb" id="3702-AT4G21050.1"/>
<dbReference type="DNASU" id="827852"/>
<dbReference type="EnsemblPlants" id="AT4G21050.1">
    <property type="protein sequence ID" value="AT4G21050.1"/>
    <property type="gene ID" value="AT4G21050"/>
</dbReference>
<dbReference type="GeneID" id="827852"/>
<dbReference type="Gramene" id="AT4G21050.1">
    <property type="protein sequence ID" value="AT4G21050.1"/>
    <property type="gene ID" value="AT4G21050"/>
</dbReference>
<dbReference type="KEGG" id="ath:AT4G21050"/>
<dbReference type="Araport" id="AT4G21050"/>
<dbReference type="TAIR" id="AT4G21050">
    <property type="gene designation" value="DOF4.4"/>
</dbReference>
<dbReference type="eggNOG" id="ENOG502RXK3">
    <property type="taxonomic scope" value="Eukaryota"/>
</dbReference>
<dbReference type="HOGENOM" id="CLU_108202_0_0_1"/>
<dbReference type="InParanoid" id="Q9SUA9"/>
<dbReference type="OMA" id="RCKSENT"/>
<dbReference type="PhylomeDB" id="Q9SUA9"/>
<dbReference type="PRO" id="PR:Q9SUA9"/>
<dbReference type="Proteomes" id="UP000006548">
    <property type="component" value="Chromosome 4"/>
</dbReference>
<dbReference type="ExpressionAtlas" id="Q9SUA9">
    <property type="expression patterns" value="baseline and differential"/>
</dbReference>
<dbReference type="GO" id="GO:0005634">
    <property type="term" value="C:nucleus"/>
    <property type="evidence" value="ECO:0007669"/>
    <property type="project" value="UniProtKB-SubCell"/>
</dbReference>
<dbReference type="GO" id="GO:0003677">
    <property type="term" value="F:DNA binding"/>
    <property type="evidence" value="ECO:0007669"/>
    <property type="project" value="UniProtKB-KW"/>
</dbReference>
<dbReference type="GO" id="GO:0003700">
    <property type="term" value="F:DNA-binding transcription factor activity"/>
    <property type="evidence" value="ECO:0000250"/>
    <property type="project" value="TAIR"/>
</dbReference>
<dbReference type="GO" id="GO:0008270">
    <property type="term" value="F:zinc ion binding"/>
    <property type="evidence" value="ECO:0007669"/>
    <property type="project" value="UniProtKB-KW"/>
</dbReference>
<dbReference type="GO" id="GO:0010154">
    <property type="term" value="P:fruit development"/>
    <property type="evidence" value="ECO:0000315"/>
    <property type="project" value="TAIR"/>
</dbReference>
<dbReference type="GO" id="GO:0045893">
    <property type="term" value="P:positive regulation of DNA-templated transcription"/>
    <property type="evidence" value="ECO:0000314"/>
    <property type="project" value="TAIR"/>
</dbReference>
<dbReference type="GO" id="GO:0006355">
    <property type="term" value="P:regulation of DNA-templated transcription"/>
    <property type="evidence" value="ECO:0000304"/>
    <property type="project" value="TAIR"/>
</dbReference>
<dbReference type="GO" id="GO:2000032">
    <property type="term" value="P:regulation of secondary shoot formation"/>
    <property type="evidence" value="ECO:0000315"/>
    <property type="project" value="TAIR"/>
</dbReference>
<dbReference type="InterPro" id="IPR045174">
    <property type="entry name" value="Dof"/>
</dbReference>
<dbReference type="InterPro" id="IPR003851">
    <property type="entry name" value="Znf_Dof"/>
</dbReference>
<dbReference type="PANTHER" id="PTHR31992">
    <property type="entry name" value="DOF ZINC FINGER PROTEIN DOF1.4-RELATED"/>
    <property type="match status" value="1"/>
</dbReference>
<dbReference type="PANTHER" id="PTHR31992:SF126">
    <property type="entry name" value="DOF ZINC FINGER PROTEIN DOF4.2-RELATED"/>
    <property type="match status" value="1"/>
</dbReference>
<dbReference type="Pfam" id="PF02701">
    <property type="entry name" value="Zn_ribbon_Dof"/>
    <property type="match status" value="1"/>
</dbReference>
<dbReference type="PROSITE" id="PS01361">
    <property type="entry name" value="ZF_DOF_1"/>
    <property type="match status" value="1"/>
</dbReference>
<dbReference type="PROSITE" id="PS50884">
    <property type="entry name" value="ZF_DOF_2"/>
    <property type="match status" value="1"/>
</dbReference>
<organism>
    <name type="scientific">Arabidopsis thaliana</name>
    <name type="common">Mouse-ear cress</name>
    <dbReference type="NCBI Taxonomy" id="3702"/>
    <lineage>
        <taxon>Eukaryota</taxon>
        <taxon>Viridiplantae</taxon>
        <taxon>Streptophyta</taxon>
        <taxon>Embryophyta</taxon>
        <taxon>Tracheophyta</taxon>
        <taxon>Spermatophyta</taxon>
        <taxon>Magnoliopsida</taxon>
        <taxon>eudicotyledons</taxon>
        <taxon>Gunneridae</taxon>
        <taxon>Pentapetalae</taxon>
        <taxon>rosids</taxon>
        <taxon>malvids</taxon>
        <taxon>Brassicales</taxon>
        <taxon>Brassicaceae</taxon>
        <taxon>Camelineae</taxon>
        <taxon>Arabidopsis</taxon>
    </lineage>
</organism>
<feature type="chain" id="PRO_0000074287" description="Dof zinc finger protein DOF4.4">
    <location>
        <begin position="1"/>
        <end position="210"/>
    </location>
</feature>
<feature type="zinc finger region" description="Dof-type" evidence="2">
    <location>
        <begin position="24"/>
        <end position="78"/>
    </location>
</feature>
<feature type="binding site" evidence="2">
    <location>
        <position position="26"/>
    </location>
    <ligand>
        <name>Zn(2+)</name>
        <dbReference type="ChEBI" id="CHEBI:29105"/>
    </ligand>
</feature>
<feature type="binding site" evidence="2">
    <location>
        <position position="29"/>
    </location>
    <ligand>
        <name>Zn(2+)</name>
        <dbReference type="ChEBI" id="CHEBI:29105"/>
    </ligand>
</feature>
<feature type="binding site" evidence="2">
    <location>
        <position position="51"/>
    </location>
    <ligand>
        <name>Zn(2+)</name>
        <dbReference type="ChEBI" id="CHEBI:29105"/>
    </ligand>
</feature>
<feature type="binding site" evidence="2">
    <location>
        <position position="54"/>
    </location>
    <ligand>
        <name>Zn(2+)</name>
        <dbReference type="ChEBI" id="CHEBI:29105"/>
    </ligand>
</feature>
<accession>Q9SUA9</accession>
<accession>C0SVI6</accession>
<reference key="1">
    <citation type="journal article" date="1999" name="Nature">
        <title>Sequence and analysis of chromosome 4 of the plant Arabidopsis thaliana.</title>
        <authorList>
            <person name="Mayer K.F.X."/>
            <person name="Schueller C."/>
            <person name="Wambutt R."/>
            <person name="Murphy G."/>
            <person name="Volckaert G."/>
            <person name="Pohl T."/>
            <person name="Duesterhoeft A."/>
            <person name="Stiekema W."/>
            <person name="Entian K.-D."/>
            <person name="Terryn N."/>
            <person name="Harris B."/>
            <person name="Ansorge W."/>
            <person name="Brandt P."/>
            <person name="Grivell L.A."/>
            <person name="Rieger M."/>
            <person name="Weichselgartner M."/>
            <person name="de Simone V."/>
            <person name="Obermaier B."/>
            <person name="Mache R."/>
            <person name="Mueller M."/>
            <person name="Kreis M."/>
            <person name="Delseny M."/>
            <person name="Puigdomenech P."/>
            <person name="Watson M."/>
            <person name="Schmidtheini T."/>
            <person name="Reichert B."/>
            <person name="Portetelle D."/>
            <person name="Perez-Alonso M."/>
            <person name="Boutry M."/>
            <person name="Bancroft I."/>
            <person name="Vos P."/>
            <person name="Hoheisel J."/>
            <person name="Zimmermann W."/>
            <person name="Wedler H."/>
            <person name="Ridley P."/>
            <person name="Langham S.-A."/>
            <person name="McCullagh B."/>
            <person name="Bilham L."/>
            <person name="Robben J."/>
            <person name="van der Schueren J."/>
            <person name="Grymonprez B."/>
            <person name="Chuang Y.-J."/>
            <person name="Vandenbussche F."/>
            <person name="Braeken M."/>
            <person name="Weltjens I."/>
            <person name="Voet M."/>
            <person name="Bastiaens I."/>
            <person name="Aert R."/>
            <person name="Defoor E."/>
            <person name="Weitzenegger T."/>
            <person name="Bothe G."/>
            <person name="Ramsperger U."/>
            <person name="Hilbert H."/>
            <person name="Braun M."/>
            <person name="Holzer E."/>
            <person name="Brandt A."/>
            <person name="Peters S."/>
            <person name="van Staveren M."/>
            <person name="Dirkse W."/>
            <person name="Mooijman P."/>
            <person name="Klein Lankhorst R."/>
            <person name="Rose M."/>
            <person name="Hauf J."/>
            <person name="Koetter P."/>
            <person name="Berneiser S."/>
            <person name="Hempel S."/>
            <person name="Feldpausch M."/>
            <person name="Lamberth S."/>
            <person name="Van den Daele H."/>
            <person name="De Keyser A."/>
            <person name="Buysshaert C."/>
            <person name="Gielen J."/>
            <person name="Villarroel R."/>
            <person name="De Clercq R."/>
            <person name="van Montagu M."/>
            <person name="Rogers J."/>
            <person name="Cronin A."/>
            <person name="Quail M.A."/>
            <person name="Bray-Allen S."/>
            <person name="Clark L."/>
            <person name="Doggett J."/>
            <person name="Hall S."/>
            <person name="Kay M."/>
            <person name="Lennard N."/>
            <person name="McLay K."/>
            <person name="Mayes R."/>
            <person name="Pettett A."/>
            <person name="Rajandream M.A."/>
            <person name="Lyne M."/>
            <person name="Benes V."/>
            <person name="Rechmann S."/>
            <person name="Borkova D."/>
            <person name="Bloecker H."/>
            <person name="Scharfe M."/>
            <person name="Grimm M."/>
            <person name="Loehnert T.-H."/>
            <person name="Dose S."/>
            <person name="de Haan M."/>
            <person name="Maarse A.C."/>
            <person name="Schaefer M."/>
            <person name="Mueller-Auer S."/>
            <person name="Gabel C."/>
            <person name="Fuchs M."/>
            <person name="Fartmann B."/>
            <person name="Granderath K."/>
            <person name="Dauner D."/>
            <person name="Herzl A."/>
            <person name="Neumann S."/>
            <person name="Argiriou A."/>
            <person name="Vitale D."/>
            <person name="Liguori R."/>
            <person name="Piravandi E."/>
            <person name="Massenet O."/>
            <person name="Quigley F."/>
            <person name="Clabauld G."/>
            <person name="Muendlein A."/>
            <person name="Felber R."/>
            <person name="Schnabl S."/>
            <person name="Hiller R."/>
            <person name="Schmidt W."/>
            <person name="Lecharny A."/>
            <person name="Aubourg S."/>
            <person name="Chefdor F."/>
            <person name="Cooke R."/>
            <person name="Berger C."/>
            <person name="Monfort A."/>
            <person name="Casacuberta E."/>
            <person name="Gibbons T."/>
            <person name="Weber N."/>
            <person name="Vandenbol M."/>
            <person name="Bargues M."/>
            <person name="Terol J."/>
            <person name="Torres A."/>
            <person name="Perez-Perez A."/>
            <person name="Purnelle B."/>
            <person name="Bent E."/>
            <person name="Johnson S."/>
            <person name="Tacon D."/>
            <person name="Jesse T."/>
            <person name="Heijnen L."/>
            <person name="Schwarz S."/>
            <person name="Scholler P."/>
            <person name="Heber S."/>
            <person name="Francs P."/>
            <person name="Bielke C."/>
            <person name="Frishman D."/>
            <person name="Haase D."/>
            <person name="Lemcke K."/>
            <person name="Mewes H.-W."/>
            <person name="Stocker S."/>
            <person name="Zaccaria P."/>
            <person name="Bevan M."/>
            <person name="Wilson R.K."/>
            <person name="de la Bastide M."/>
            <person name="Habermann K."/>
            <person name="Parnell L."/>
            <person name="Dedhia N."/>
            <person name="Gnoj L."/>
            <person name="Schutz K."/>
            <person name="Huang E."/>
            <person name="Spiegel L."/>
            <person name="Sekhon M."/>
            <person name="Murray J."/>
            <person name="Sheet P."/>
            <person name="Cordes M."/>
            <person name="Abu-Threideh J."/>
            <person name="Stoneking T."/>
            <person name="Kalicki J."/>
            <person name="Graves T."/>
            <person name="Harmon G."/>
            <person name="Edwards J."/>
            <person name="Latreille P."/>
            <person name="Courtney L."/>
            <person name="Cloud J."/>
            <person name="Abbott A."/>
            <person name="Scott K."/>
            <person name="Johnson D."/>
            <person name="Minx P."/>
            <person name="Bentley D."/>
            <person name="Fulton B."/>
            <person name="Miller N."/>
            <person name="Greco T."/>
            <person name="Kemp K."/>
            <person name="Kramer J."/>
            <person name="Fulton L."/>
            <person name="Mardis E."/>
            <person name="Dante M."/>
            <person name="Pepin K."/>
            <person name="Hillier L.W."/>
            <person name="Nelson J."/>
            <person name="Spieth J."/>
            <person name="Ryan E."/>
            <person name="Andrews S."/>
            <person name="Geisel C."/>
            <person name="Layman D."/>
            <person name="Du H."/>
            <person name="Ali J."/>
            <person name="Berghoff A."/>
            <person name="Jones K."/>
            <person name="Drone K."/>
            <person name="Cotton M."/>
            <person name="Joshu C."/>
            <person name="Antonoiu B."/>
            <person name="Zidanic M."/>
            <person name="Strong C."/>
            <person name="Sun H."/>
            <person name="Lamar B."/>
            <person name="Yordan C."/>
            <person name="Ma P."/>
            <person name="Zhong J."/>
            <person name="Preston R."/>
            <person name="Vil D."/>
            <person name="Shekher M."/>
            <person name="Matero A."/>
            <person name="Shah R."/>
            <person name="Swaby I.K."/>
            <person name="O'Shaughnessy A."/>
            <person name="Rodriguez M."/>
            <person name="Hoffman J."/>
            <person name="Till S."/>
            <person name="Granat S."/>
            <person name="Shohdy N."/>
            <person name="Hasegawa A."/>
            <person name="Hameed A."/>
            <person name="Lodhi M."/>
            <person name="Johnson A."/>
            <person name="Chen E."/>
            <person name="Marra M.A."/>
            <person name="Martienssen R."/>
            <person name="McCombie W.R."/>
        </authorList>
    </citation>
    <scope>NUCLEOTIDE SEQUENCE [LARGE SCALE GENOMIC DNA]</scope>
    <source>
        <strain>cv. Columbia</strain>
    </source>
</reference>
<reference key="2">
    <citation type="journal article" date="2017" name="Plant J.">
        <title>Araport11: a complete reannotation of the Arabidopsis thaliana reference genome.</title>
        <authorList>
            <person name="Cheng C.Y."/>
            <person name="Krishnakumar V."/>
            <person name="Chan A.P."/>
            <person name="Thibaud-Nissen F."/>
            <person name="Schobel S."/>
            <person name="Town C.D."/>
        </authorList>
    </citation>
    <scope>GENOME REANNOTATION</scope>
    <source>
        <strain>cv. Columbia</strain>
    </source>
</reference>
<reference key="3">
    <citation type="submission" date="2009-03" db="EMBL/GenBank/DDBJ databases">
        <title>ORF cloning and analysis of Arabidopsis transcription factor genes.</title>
        <authorList>
            <person name="Fujita M."/>
            <person name="Mizukado S."/>
            <person name="Seki M."/>
            <person name="Shinozaki K."/>
            <person name="Mitsuda N."/>
            <person name="Takiguchi Y."/>
            <person name="Takagi M."/>
        </authorList>
    </citation>
    <scope>NUCLEOTIDE SEQUENCE [LARGE SCALE GENOMIC DNA]</scope>
</reference>
<reference key="4">
    <citation type="journal article" date="2002" name="Trends Plant Sci.">
        <title>The Dof family of plant transcription factors.</title>
        <authorList>
            <person name="Yanagisawa S."/>
        </authorList>
    </citation>
    <scope>GENE FAMILY</scope>
    <scope>NOMENCLATURE</scope>
</reference>
<evidence type="ECO:0000250" key="1"/>
<evidence type="ECO:0000255" key="2">
    <source>
        <dbReference type="PROSITE-ProRule" id="PRU00071"/>
    </source>
</evidence>
<evidence type="ECO:0000305" key="3"/>
<comment type="function">
    <text evidence="1">Transcription factor that binds specifically to a 5'-AA[AG]G-3' consensus core sequence.</text>
</comment>
<comment type="subcellular location">
    <subcellularLocation>
        <location evidence="3">Nucleus</location>
    </subcellularLocation>
</comment>
<proteinExistence type="inferred from homology"/>